<keyword id="KW-0106">Calcium</keyword>
<keyword id="KW-1015">Disulfide bond</keyword>
<keyword id="KW-0325">Glycoprotein</keyword>
<keyword id="KW-0326">Glycosidase</keyword>
<keyword id="KW-1032">Host cell membrane</keyword>
<keyword id="KW-1043">Host membrane</keyword>
<keyword id="KW-0378">Hydrolase</keyword>
<keyword id="KW-0472">Membrane</keyword>
<keyword id="KW-0479">Metal-binding</keyword>
<keyword id="KW-0735">Signal-anchor</keyword>
<keyword id="KW-0812">Transmembrane</keyword>
<keyword id="KW-1133">Transmembrane helix</keyword>
<keyword id="KW-0946">Virion</keyword>
<feature type="chain" id="PRO_0000280133" description="Neuraminidase">
    <location>
        <begin position="1"/>
        <end position="471"/>
    </location>
</feature>
<feature type="topological domain" description="Intravirion" evidence="1">
    <location>
        <begin position="1"/>
        <end position="6"/>
    </location>
</feature>
<feature type="transmembrane region" description="Helical" evidence="1">
    <location>
        <begin position="7"/>
        <end position="27"/>
    </location>
</feature>
<feature type="topological domain" description="Virion surface" evidence="1">
    <location>
        <begin position="28"/>
        <end position="471"/>
    </location>
</feature>
<feature type="region of interest" description="Involved in apical transport and lipid raft association" evidence="1">
    <location>
        <begin position="11"/>
        <end position="33"/>
    </location>
</feature>
<feature type="region of interest" description="Hypervariable stalk region" evidence="1">
    <location>
        <begin position="36"/>
        <end position="89"/>
    </location>
</feature>
<feature type="region of interest" description="Head of neuraminidase" evidence="1">
    <location>
        <begin position="92"/>
        <end position="471"/>
    </location>
</feature>
<feature type="active site" description="Proton donor/acceptor" evidence="1">
    <location>
        <position position="152"/>
    </location>
</feature>
<feature type="active site" description="Nucleophile" evidence="1">
    <location>
        <position position="407"/>
    </location>
</feature>
<feature type="binding site" evidence="1">
    <location>
        <position position="119"/>
    </location>
    <ligand>
        <name>substrate</name>
    </ligand>
</feature>
<feature type="binding site" evidence="1">
    <location>
        <position position="153"/>
    </location>
    <ligand>
        <name>substrate</name>
    </ligand>
</feature>
<feature type="binding site" evidence="1">
    <location>
        <begin position="278"/>
        <end position="279"/>
    </location>
    <ligand>
        <name>substrate</name>
    </ligand>
</feature>
<feature type="binding site" evidence="1">
    <location>
        <position position="294"/>
    </location>
    <ligand>
        <name>substrate</name>
    </ligand>
</feature>
<feature type="binding site" evidence="1">
    <location>
        <position position="295"/>
    </location>
    <ligand>
        <name>Ca(2+)</name>
        <dbReference type="ChEBI" id="CHEBI:29108"/>
    </ligand>
</feature>
<feature type="binding site" evidence="1">
    <location>
        <position position="299"/>
    </location>
    <ligand>
        <name>Ca(2+)</name>
        <dbReference type="ChEBI" id="CHEBI:29108"/>
    </ligand>
</feature>
<feature type="binding site" evidence="1">
    <location>
        <position position="326"/>
    </location>
    <ligand>
        <name>Ca(2+)</name>
        <dbReference type="ChEBI" id="CHEBI:29108"/>
    </ligand>
</feature>
<feature type="binding site" evidence="1">
    <location>
        <position position="373"/>
    </location>
    <ligand>
        <name>substrate</name>
    </ligand>
</feature>
<feature type="glycosylation site" description="N-linked (GlcNAc...) asparagine; by host" evidence="1">
    <location>
        <position position="51"/>
    </location>
</feature>
<feature type="glycosylation site" description="N-linked (GlcNAc...) asparagine; by host" evidence="1">
    <location>
        <position position="54"/>
    </location>
</feature>
<feature type="glycosylation site" description="N-linked (GlcNAc...) asparagine; by host" evidence="1">
    <location>
        <position position="63"/>
    </location>
</feature>
<feature type="glycosylation site" description="N-linked (GlcNAc...) asparagine; by host" evidence="1">
    <location>
        <position position="68"/>
    </location>
</feature>
<feature type="glycosylation site" description="N-linked (GlcNAc...) asparagine; by host" evidence="1">
    <location>
        <position position="71"/>
    </location>
</feature>
<feature type="glycosylation site" description="N-linked (GlcNAc...) asparagine; by host" evidence="1">
    <location>
        <position position="87"/>
    </location>
</feature>
<feature type="glycosylation site" description="N-linked (GlcNAc...) asparagine; by host" evidence="1">
    <location>
        <position position="147"/>
    </location>
</feature>
<feature type="glycosylation site" description="N-linked (GlcNAc...) asparagine; by host" evidence="1">
    <location>
        <position position="202"/>
    </location>
</feature>
<feature type="glycosylation site" description="N-linked (GlcNAc...) asparagine; by host" evidence="1">
    <location>
        <position position="403"/>
    </location>
</feature>
<feature type="disulfide bond" evidence="1">
    <location>
        <begin position="93"/>
        <end position="420"/>
    </location>
</feature>
<feature type="disulfide bond" evidence="1">
    <location>
        <begin position="125"/>
        <end position="130"/>
    </location>
</feature>
<feature type="disulfide bond" evidence="1">
    <location>
        <begin position="185"/>
        <end position="232"/>
    </location>
</feature>
<feature type="disulfide bond" evidence="1">
    <location>
        <begin position="234"/>
        <end position="239"/>
    </location>
</feature>
<feature type="disulfide bond" evidence="1">
    <location>
        <begin position="280"/>
        <end position="293"/>
    </location>
</feature>
<feature type="disulfide bond" evidence="1">
    <location>
        <begin position="282"/>
        <end position="291"/>
    </location>
</feature>
<feature type="disulfide bond" evidence="1">
    <location>
        <begin position="320"/>
        <end position="338"/>
    </location>
</feature>
<feature type="disulfide bond" evidence="1">
    <location>
        <begin position="424"/>
        <end position="450"/>
    </location>
</feature>
<comment type="function">
    <text evidence="1">Catalyzes the removal of terminal sialic acid residues from viral and cellular glycoconjugates. Cleaves off the terminal sialic acids on the glycosylated HA during virus budding to facilitate virus release. Additionally helps virus spread through the circulation by further removing sialic acids from the cell surface. These cleavages prevent self-aggregation and ensure the efficient spread of the progeny virus from cell to cell. Otherwise, infection would be limited to one round of replication. Described as a receptor-destroying enzyme because it cleaves a terminal sialic acid from the cellular receptors. May facilitate viral invasion of the upper airways by cleaving the sialic acid moieties on the mucin of the airway epithelial cells. Likely to plays a role in the budding process through its association with lipid rafts during intracellular transport. May additionally display a raft-association independent effect on budding. Plays a role in the determination of host range restriction on replication and virulence. Sialidase activity in late endosome/lysosome traffic seems to enhance virus replication.</text>
</comment>
<comment type="catalytic activity">
    <reaction evidence="1">
        <text>Hydrolysis of alpha-(2-&gt;3)-, alpha-(2-&gt;6)-, alpha-(2-&gt;8)- glycosidic linkages of terminal sialic acid residues in oligosaccharides, glycoproteins, glycolipids, colominic acid and synthetic substrates.</text>
        <dbReference type="EC" id="3.2.1.18"/>
    </reaction>
</comment>
<comment type="cofactor">
    <cofactor evidence="1">
        <name>Ca(2+)</name>
        <dbReference type="ChEBI" id="CHEBI:29108"/>
    </cofactor>
</comment>
<comment type="activity regulation">
    <text evidence="1">Inhibited by the neuraminidase inhibitors zanamivir (Relenza) and oseltamivir (Tamiflu). These drugs interfere with the release of progeny virus from infected cells and are effective against all influenza strains. Resistance to neuraminidase inhibitors is quite rare.</text>
</comment>
<comment type="subunit">
    <text evidence="1">Homotetramer.</text>
</comment>
<comment type="subcellular location">
    <subcellularLocation>
        <location evidence="1">Virion membrane</location>
    </subcellularLocation>
    <subcellularLocation>
        <location evidence="1">Host apical cell membrane</location>
        <topology evidence="1">Single-pass type II membrane protein</topology>
    </subcellularLocation>
    <text evidence="1">Preferentially accumulates at the apical plasma membrane in infected polarized epithelial cells, which is the virus assembly site. Uses lipid rafts for cell surface transport and apical sorting. In the virion, forms a mushroom-shaped spike on the surface of the membrane.</text>
</comment>
<comment type="domain">
    <text evidence="1">Intact N-terminus is essential for virion morphogenesis. Possesses two apical sorting signals, one in the ectodomain, which is likely to be a glycan, and the other in the transmembrane domain. The transmembrane domain also plays a role in lipid raft association.</text>
</comment>
<comment type="PTM">
    <text evidence="1">N-glycosylated.</text>
</comment>
<comment type="miscellaneous">
    <text>The influenza A genome consist of 8 RNA segments. Genetic variation of hemagglutinin and/or neuraminidase genes results in the emergence of new influenza strains. The mechanism of variation can be the result of point mutations or the result of genetic reassortment between segments of two different strains.</text>
</comment>
<comment type="similarity">
    <text evidence="1">Belongs to the glycosyl hydrolase 34 family.</text>
</comment>
<organism>
    <name type="scientific">Influenza A virus (strain A/Gull/Maryland/704/1977 H13N6)</name>
    <dbReference type="NCBI Taxonomy" id="384499"/>
    <lineage>
        <taxon>Viruses</taxon>
        <taxon>Riboviria</taxon>
        <taxon>Orthornavirae</taxon>
        <taxon>Negarnaviricota</taxon>
        <taxon>Polyploviricotina</taxon>
        <taxon>Insthoviricetes</taxon>
        <taxon>Articulavirales</taxon>
        <taxon>Orthomyxoviridae</taxon>
        <taxon>Alphainfluenzavirus</taxon>
        <taxon>Alphainfluenzavirus influenzae</taxon>
        <taxon>Influenza A virus</taxon>
    </lineage>
</organism>
<evidence type="ECO:0000255" key="1">
    <source>
        <dbReference type="HAMAP-Rule" id="MF_04071"/>
    </source>
</evidence>
<protein>
    <recommendedName>
        <fullName evidence="1">Neuraminidase</fullName>
        <ecNumber evidence="1">3.2.1.18</ecNumber>
    </recommendedName>
</protein>
<dbReference type="EC" id="3.2.1.18" evidence="1"/>
<dbReference type="EMBL" id="AY207553">
    <property type="protein sequence ID" value="AAO62067.1"/>
    <property type="molecule type" value="Genomic_DNA"/>
</dbReference>
<dbReference type="EMBL" id="CY014696">
    <property type="protein sequence ID" value="ABI84569.1"/>
    <property type="molecule type" value="Genomic_RNA"/>
</dbReference>
<dbReference type="SMR" id="Q6XV23"/>
<dbReference type="CAZy" id="GH34">
    <property type="family name" value="Glycoside Hydrolase Family 34"/>
</dbReference>
<dbReference type="GlyCosmos" id="Q6XV23">
    <property type="glycosylation" value="9 sites, No reported glycans"/>
</dbReference>
<dbReference type="PRO" id="PR:Q6XV23"/>
<dbReference type="Proteomes" id="UP000000828">
    <property type="component" value="Genome"/>
</dbReference>
<dbReference type="GO" id="GO:0020002">
    <property type="term" value="C:host cell plasma membrane"/>
    <property type="evidence" value="ECO:0007669"/>
    <property type="project" value="UniProtKB-SubCell"/>
</dbReference>
<dbReference type="GO" id="GO:0016020">
    <property type="term" value="C:membrane"/>
    <property type="evidence" value="ECO:0007669"/>
    <property type="project" value="UniProtKB-UniRule"/>
</dbReference>
<dbReference type="GO" id="GO:0055036">
    <property type="term" value="C:virion membrane"/>
    <property type="evidence" value="ECO:0007669"/>
    <property type="project" value="UniProtKB-SubCell"/>
</dbReference>
<dbReference type="GO" id="GO:0004308">
    <property type="term" value="F:exo-alpha-sialidase activity"/>
    <property type="evidence" value="ECO:0007669"/>
    <property type="project" value="UniProtKB-UniRule"/>
</dbReference>
<dbReference type="GO" id="GO:0046872">
    <property type="term" value="F:metal ion binding"/>
    <property type="evidence" value="ECO:0007669"/>
    <property type="project" value="UniProtKB-UniRule"/>
</dbReference>
<dbReference type="GO" id="GO:0005975">
    <property type="term" value="P:carbohydrate metabolic process"/>
    <property type="evidence" value="ECO:0007669"/>
    <property type="project" value="InterPro"/>
</dbReference>
<dbReference type="GO" id="GO:0046761">
    <property type="term" value="P:viral budding from plasma membrane"/>
    <property type="evidence" value="ECO:0007669"/>
    <property type="project" value="UniProtKB-UniRule"/>
</dbReference>
<dbReference type="Gene3D" id="2.120.10.10">
    <property type="match status" value="1"/>
</dbReference>
<dbReference type="HAMAP" id="MF_04071">
    <property type="entry name" value="INFV_NRAM"/>
    <property type="match status" value="1"/>
</dbReference>
<dbReference type="InterPro" id="IPR001860">
    <property type="entry name" value="Glyco_hydro_34"/>
</dbReference>
<dbReference type="InterPro" id="IPR036278">
    <property type="entry name" value="Sialidase_sf"/>
</dbReference>
<dbReference type="Pfam" id="PF00064">
    <property type="entry name" value="Neur"/>
    <property type="match status" value="1"/>
</dbReference>
<dbReference type="SUPFAM" id="SSF50939">
    <property type="entry name" value="Sialidases"/>
    <property type="match status" value="1"/>
</dbReference>
<sequence length="471" mass="51888">MNPNQKIICISATGMTLSVVSLLIGIANLGLNIGLHYKVGDTPDVNTPNVNGTNSTTTTIINNNTQNNFTNITNIIHNKNEERTFLNLTKPLCEVNSWHILSKDNAIRIGEEAHILVTREPYLSCDPQGCRMFALSQGTTLRGRHANGTIHDRSPFRALVSWEMGQAPSPYNAKIECIGWSSTSCHDGISRMSICMSGPNNNASAVVWYGGRPVTEIPSWAGNILRTQESECVCHKGICPVVMTDGPANNKAATKIIYFKEGKIQKIEELTGNAQHIEECSCYGAKEVIKCICRDNWKGANRPVITIDPEMMTHTSKYLCSKILTDTSRPNDPTNGNCDAPITGGNPDPGVKGFAFLDGENSWLGRTISKDSRSGYEMLKVPNAETNTQSGPITHQVIVNNQNWSGYSGAFIDYWANKECFNPCFYVELIRGRPKESSVLWTSNSIVALCGSKERLGSWSWHDGAEIIYFK</sequence>
<reference key="1">
    <citation type="submission" date="2002-12" db="EMBL/GenBank/DDBJ databases">
        <title>Genetic analysis of multiple N3, N4, and N6 influenza A virus neuraminidase genes.</title>
        <authorList>
            <person name="Webby R.J."/>
            <person name="Humberd J.L."/>
            <person name="Krauss S.L."/>
        </authorList>
    </citation>
    <scope>NUCLEOTIDE SEQUENCE [GENOMIC RNA]</scope>
</reference>
<reference key="2">
    <citation type="journal article" date="2006" name="Science">
        <title>Large-scale sequence analysis of avian influenza isolates.</title>
        <authorList>
            <person name="Obenauer J.C."/>
            <person name="Denson J."/>
            <person name="Mehta P.K."/>
            <person name="Su X."/>
            <person name="Mukatira S."/>
            <person name="Finkelstein D.B."/>
            <person name="Xu X."/>
            <person name="Wang J."/>
            <person name="Ma J."/>
            <person name="Fan Y."/>
            <person name="Rakestraw K.M."/>
            <person name="Webster R.G."/>
            <person name="Hoffmann E."/>
            <person name="Krauss S."/>
            <person name="Zheng J."/>
            <person name="Zhang Z."/>
            <person name="Naeve C.W."/>
        </authorList>
    </citation>
    <scope>NUCLEOTIDE SEQUENCE [GENOMIC RNA]</scope>
</reference>
<reference key="3">
    <citation type="journal article" date="2004" name="Virus Res.">
        <title>Assembly and budding of influenza virus.</title>
        <authorList>
            <person name="Nayak D.P."/>
            <person name="Hui E.K."/>
            <person name="Barman S."/>
        </authorList>
    </citation>
    <scope>REVIEW</scope>
</reference>
<reference key="4">
    <citation type="journal article" date="2005" name="N. Engl. J. Med.">
        <title>Neuraminidase inhibitors for influenza.</title>
        <authorList>
            <person name="Moscona A."/>
        </authorList>
    </citation>
    <scope>REVIEW</scope>
</reference>
<reference key="5">
    <citation type="journal article" date="2005" name="Biol. Pharm. Bull.">
        <title>Sialobiology of influenza: molecular mechanism of host range variation of influenza viruses.</title>
        <authorList>
            <person name="Suzuki Y."/>
        </authorList>
    </citation>
    <scope>REVIEW</scope>
</reference>
<organismHost>
    <name type="scientific">Aves</name>
    <dbReference type="NCBI Taxonomy" id="8782"/>
</organismHost>
<name>NRAM_I77AF</name>
<gene>
    <name evidence="1" type="primary">NA</name>
</gene>
<proteinExistence type="inferred from homology"/>
<accession>Q6XV23</accession>